<keyword id="KW-0963">Cytoplasm</keyword>
<keyword id="KW-0396">Initiation factor</keyword>
<keyword id="KW-0648">Protein biosynthesis</keyword>
<keyword id="KW-1185">Reference proteome</keyword>
<keyword id="KW-0694">RNA-binding</keyword>
<keyword id="KW-0699">rRNA-binding</keyword>
<accession>A0LIL3</accession>
<feature type="chain" id="PRO_0000338942" description="Translation initiation factor IF-1">
    <location>
        <begin position="1"/>
        <end position="73"/>
    </location>
</feature>
<feature type="domain" description="S1-like" evidence="1">
    <location>
        <begin position="1"/>
        <end position="72"/>
    </location>
</feature>
<proteinExistence type="inferred from homology"/>
<organism>
    <name type="scientific">Syntrophobacter fumaroxidans (strain DSM 10017 / MPOB)</name>
    <dbReference type="NCBI Taxonomy" id="335543"/>
    <lineage>
        <taxon>Bacteria</taxon>
        <taxon>Pseudomonadati</taxon>
        <taxon>Thermodesulfobacteriota</taxon>
        <taxon>Syntrophobacteria</taxon>
        <taxon>Syntrophobacterales</taxon>
        <taxon>Syntrophobacteraceae</taxon>
        <taxon>Syntrophobacter</taxon>
    </lineage>
</organism>
<dbReference type="EMBL" id="CP000478">
    <property type="protein sequence ID" value="ABK17265.1"/>
    <property type="molecule type" value="Genomic_DNA"/>
</dbReference>
<dbReference type="RefSeq" id="WP_011698435.1">
    <property type="nucleotide sequence ID" value="NC_008554.1"/>
</dbReference>
<dbReference type="SMR" id="A0LIL3"/>
<dbReference type="FunCoup" id="A0LIL3">
    <property type="interactions" value="450"/>
</dbReference>
<dbReference type="STRING" id="335543.Sfum_1578"/>
<dbReference type="KEGG" id="sfu:Sfum_1578"/>
<dbReference type="eggNOG" id="COG0361">
    <property type="taxonomic scope" value="Bacteria"/>
</dbReference>
<dbReference type="HOGENOM" id="CLU_151267_1_0_7"/>
<dbReference type="InParanoid" id="A0LIL3"/>
<dbReference type="OrthoDB" id="9803250at2"/>
<dbReference type="Proteomes" id="UP000001784">
    <property type="component" value="Chromosome"/>
</dbReference>
<dbReference type="GO" id="GO:0005829">
    <property type="term" value="C:cytosol"/>
    <property type="evidence" value="ECO:0007669"/>
    <property type="project" value="TreeGrafter"/>
</dbReference>
<dbReference type="GO" id="GO:0043022">
    <property type="term" value="F:ribosome binding"/>
    <property type="evidence" value="ECO:0007669"/>
    <property type="project" value="UniProtKB-UniRule"/>
</dbReference>
<dbReference type="GO" id="GO:0019843">
    <property type="term" value="F:rRNA binding"/>
    <property type="evidence" value="ECO:0007669"/>
    <property type="project" value="UniProtKB-UniRule"/>
</dbReference>
<dbReference type="GO" id="GO:0003743">
    <property type="term" value="F:translation initiation factor activity"/>
    <property type="evidence" value="ECO:0007669"/>
    <property type="project" value="UniProtKB-UniRule"/>
</dbReference>
<dbReference type="CDD" id="cd04451">
    <property type="entry name" value="S1_IF1"/>
    <property type="match status" value="1"/>
</dbReference>
<dbReference type="FunFam" id="2.40.50.140:FF:000002">
    <property type="entry name" value="Translation initiation factor IF-1"/>
    <property type="match status" value="1"/>
</dbReference>
<dbReference type="Gene3D" id="2.40.50.140">
    <property type="entry name" value="Nucleic acid-binding proteins"/>
    <property type="match status" value="1"/>
</dbReference>
<dbReference type="HAMAP" id="MF_00075">
    <property type="entry name" value="IF_1"/>
    <property type="match status" value="1"/>
</dbReference>
<dbReference type="InterPro" id="IPR012340">
    <property type="entry name" value="NA-bd_OB-fold"/>
</dbReference>
<dbReference type="InterPro" id="IPR006196">
    <property type="entry name" value="RNA-binding_domain_S1_IF1"/>
</dbReference>
<dbReference type="InterPro" id="IPR003029">
    <property type="entry name" value="S1_domain"/>
</dbReference>
<dbReference type="InterPro" id="IPR004368">
    <property type="entry name" value="TIF_IF1"/>
</dbReference>
<dbReference type="NCBIfam" id="TIGR00008">
    <property type="entry name" value="infA"/>
    <property type="match status" value="1"/>
</dbReference>
<dbReference type="PANTHER" id="PTHR33370">
    <property type="entry name" value="TRANSLATION INITIATION FACTOR IF-1, CHLOROPLASTIC"/>
    <property type="match status" value="1"/>
</dbReference>
<dbReference type="PANTHER" id="PTHR33370:SF1">
    <property type="entry name" value="TRANSLATION INITIATION FACTOR IF-1, CHLOROPLASTIC"/>
    <property type="match status" value="1"/>
</dbReference>
<dbReference type="Pfam" id="PF01176">
    <property type="entry name" value="eIF-1a"/>
    <property type="match status" value="1"/>
</dbReference>
<dbReference type="SMART" id="SM00316">
    <property type="entry name" value="S1"/>
    <property type="match status" value="1"/>
</dbReference>
<dbReference type="SUPFAM" id="SSF50249">
    <property type="entry name" value="Nucleic acid-binding proteins"/>
    <property type="match status" value="1"/>
</dbReference>
<dbReference type="PROSITE" id="PS50832">
    <property type="entry name" value="S1_IF1_TYPE"/>
    <property type="match status" value="1"/>
</dbReference>
<protein>
    <recommendedName>
        <fullName evidence="1">Translation initiation factor IF-1</fullName>
    </recommendedName>
</protein>
<sequence length="73" mass="8307">MAKEDAIEVEGTVVETLPNAMFRVELPNGHRILAHISGKMRMHFIRILPGDKVTVELSPYDLNRGRITYRSKS</sequence>
<gene>
    <name evidence="1" type="primary">infA</name>
    <name type="ordered locus">Sfum_1578</name>
</gene>
<reference key="1">
    <citation type="submission" date="2006-10" db="EMBL/GenBank/DDBJ databases">
        <title>Complete sequence of Syntrophobacter fumaroxidans MPOB.</title>
        <authorList>
            <consortium name="US DOE Joint Genome Institute"/>
            <person name="Copeland A."/>
            <person name="Lucas S."/>
            <person name="Lapidus A."/>
            <person name="Barry K."/>
            <person name="Detter J.C."/>
            <person name="Glavina del Rio T."/>
            <person name="Hammon N."/>
            <person name="Israni S."/>
            <person name="Pitluck S."/>
            <person name="Goltsman E.G."/>
            <person name="Martinez M."/>
            <person name="Schmutz J."/>
            <person name="Larimer F."/>
            <person name="Land M."/>
            <person name="Hauser L."/>
            <person name="Kyrpides N."/>
            <person name="Kim E."/>
            <person name="Boone D.R."/>
            <person name="Brockman F."/>
            <person name="Culley D."/>
            <person name="Ferry J."/>
            <person name="Gunsalus R."/>
            <person name="McInerney M.J."/>
            <person name="Morrison M."/>
            <person name="Plugge C."/>
            <person name="Rohlin L."/>
            <person name="Scholten J."/>
            <person name="Sieber J."/>
            <person name="Stams A.J.M."/>
            <person name="Worm P."/>
            <person name="Henstra A.M."/>
            <person name="Richardson P."/>
        </authorList>
    </citation>
    <scope>NUCLEOTIDE SEQUENCE [LARGE SCALE GENOMIC DNA]</scope>
    <source>
        <strain>DSM 10017 / MPOB</strain>
    </source>
</reference>
<name>IF1_SYNFM</name>
<evidence type="ECO:0000255" key="1">
    <source>
        <dbReference type="HAMAP-Rule" id="MF_00075"/>
    </source>
</evidence>
<comment type="function">
    <text evidence="1">One of the essential components for the initiation of protein synthesis. Stabilizes the binding of IF-2 and IF-3 on the 30S subunit to which N-formylmethionyl-tRNA(fMet) subsequently binds. Helps modulate mRNA selection, yielding the 30S pre-initiation complex (PIC). Upon addition of the 50S ribosomal subunit IF-1, IF-2 and IF-3 are released leaving the mature 70S translation initiation complex.</text>
</comment>
<comment type="subunit">
    <text evidence="1">Component of the 30S ribosomal translation pre-initiation complex which assembles on the 30S ribosome in the order IF-2 and IF-3, IF-1 and N-formylmethionyl-tRNA(fMet); mRNA recruitment can occur at any time during PIC assembly.</text>
</comment>
<comment type="subcellular location">
    <subcellularLocation>
        <location evidence="1">Cytoplasm</location>
    </subcellularLocation>
</comment>
<comment type="similarity">
    <text evidence="1">Belongs to the IF-1 family.</text>
</comment>